<sequence>MARNIQSLERAAAMLRLLAGGERRLGLSDIASTLGLAKGTAHGILRSLQAEGFVEQEPASGRYQLGAELLALGNSYLDVHELRARALVWTDDLARSSGEAAYLGVLHQQGVLIVHHVFRPDDSRQVLEVGAMHPLHSTAHGKVISAFDPVAHSEVLEGDRATLTGRTVTEAAAFEEVLDLTRARGWALDLEETWEGVASLAAPVHDRRRMAVGAVGVTGPVERLCPDGAPATELVTAVRDCAAAVSRDLGAGRF</sequence>
<accession>P22866</accession>
<gene>
    <name type="primary">gylR</name>
</gene>
<evidence type="ECO:0000255" key="1">
    <source>
        <dbReference type="PROSITE-ProRule" id="PRU00393"/>
    </source>
</evidence>
<evidence type="ECO:0000255" key="2">
    <source>
        <dbReference type="PROSITE-ProRule" id="PRU00394"/>
    </source>
</evidence>
<name>GYLR_STRGR</name>
<comment type="function">
    <text>May be an activator protein for the gylABX operon.</text>
</comment>
<reference key="1">
    <citation type="journal article" date="1990" name="Gene">
        <title>Nucleotide sequence of the putative regulatory gene and major promoter region of the Streptomyces griseus glycerol operon.</title>
        <authorList>
            <person name="Bolotin A."/>
            <person name="Biro S."/>
        </authorList>
    </citation>
    <scope>NUCLEOTIDE SEQUENCE [MRNA]</scope>
</reference>
<dbReference type="EMBL" id="M37327">
    <property type="protein sequence ID" value="AAA26750.1"/>
    <property type="molecule type" value="mRNA"/>
</dbReference>
<dbReference type="PIR" id="JQ0490">
    <property type="entry name" value="JQ0490"/>
</dbReference>
<dbReference type="SMR" id="P22866"/>
<dbReference type="STRING" id="1911.GCA_001715295_04675"/>
<dbReference type="GO" id="GO:0003677">
    <property type="term" value="F:DNA binding"/>
    <property type="evidence" value="ECO:0007669"/>
    <property type="project" value="UniProtKB-KW"/>
</dbReference>
<dbReference type="GO" id="GO:0003700">
    <property type="term" value="F:DNA-binding transcription factor activity"/>
    <property type="evidence" value="ECO:0007669"/>
    <property type="project" value="TreeGrafter"/>
</dbReference>
<dbReference type="GO" id="GO:0006071">
    <property type="term" value="P:glycerol metabolic process"/>
    <property type="evidence" value="ECO:0007669"/>
    <property type="project" value="UniProtKB-KW"/>
</dbReference>
<dbReference type="GO" id="GO:0045892">
    <property type="term" value="P:negative regulation of DNA-templated transcription"/>
    <property type="evidence" value="ECO:0007669"/>
    <property type="project" value="TreeGrafter"/>
</dbReference>
<dbReference type="FunFam" id="1.10.10.10:FF:000056">
    <property type="entry name" value="IclR family transcriptional regulator"/>
    <property type="match status" value="1"/>
</dbReference>
<dbReference type="Gene3D" id="3.30.450.40">
    <property type="match status" value="1"/>
</dbReference>
<dbReference type="Gene3D" id="1.10.10.10">
    <property type="entry name" value="Winged helix-like DNA-binding domain superfamily/Winged helix DNA-binding domain"/>
    <property type="match status" value="1"/>
</dbReference>
<dbReference type="InterPro" id="IPR029016">
    <property type="entry name" value="GAF-like_dom_sf"/>
</dbReference>
<dbReference type="InterPro" id="IPR050707">
    <property type="entry name" value="HTH_MetabolicPath_Reg"/>
</dbReference>
<dbReference type="InterPro" id="IPR014757">
    <property type="entry name" value="Tscrpt_reg_IclR_C"/>
</dbReference>
<dbReference type="InterPro" id="IPR005471">
    <property type="entry name" value="Tscrpt_reg_IclR_N"/>
</dbReference>
<dbReference type="InterPro" id="IPR036388">
    <property type="entry name" value="WH-like_DNA-bd_sf"/>
</dbReference>
<dbReference type="InterPro" id="IPR036390">
    <property type="entry name" value="WH_DNA-bd_sf"/>
</dbReference>
<dbReference type="PANTHER" id="PTHR30136">
    <property type="entry name" value="HELIX-TURN-HELIX TRANSCRIPTIONAL REGULATOR, ICLR FAMILY"/>
    <property type="match status" value="1"/>
</dbReference>
<dbReference type="PANTHER" id="PTHR30136:SF24">
    <property type="entry name" value="HTH-TYPE TRANSCRIPTIONAL REPRESSOR ALLR"/>
    <property type="match status" value="1"/>
</dbReference>
<dbReference type="Pfam" id="PF09339">
    <property type="entry name" value="HTH_IclR"/>
    <property type="match status" value="1"/>
</dbReference>
<dbReference type="Pfam" id="PF01614">
    <property type="entry name" value="IclR_C"/>
    <property type="match status" value="1"/>
</dbReference>
<dbReference type="SMART" id="SM00346">
    <property type="entry name" value="HTH_ICLR"/>
    <property type="match status" value="1"/>
</dbReference>
<dbReference type="SUPFAM" id="SSF55781">
    <property type="entry name" value="GAF domain-like"/>
    <property type="match status" value="1"/>
</dbReference>
<dbReference type="SUPFAM" id="SSF46785">
    <property type="entry name" value="Winged helix' DNA-binding domain"/>
    <property type="match status" value="1"/>
</dbReference>
<dbReference type="PROSITE" id="PS51077">
    <property type="entry name" value="HTH_ICLR"/>
    <property type="match status" value="1"/>
</dbReference>
<dbReference type="PROSITE" id="PS51078">
    <property type="entry name" value="ICLR_ED"/>
    <property type="match status" value="1"/>
</dbReference>
<feature type="chain" id="PRO_0000201757" description="Glycerol operon regulatory protein">
    <location>
        <begin position="1"/>
        <end position="254"/>
    </location>
</feature>
<feature type="domain" description="HTH iclR-type" evidence="1">
    <location>
        <begin position="5"/>
        <end position="67"/>
    </location>
</feature>
<feature type="domain" description="IclR-ED" evidence="2">
    <location>
        <begin position="82"/>
        <end position="251"/>
    </location>
</feature>
<feature type="DNA-binding region" description="H-T-H motif" evidence="1">
    <location>
        <begin position="27"/>
        <end position="46"/>
    </location>
</feature>
<organism>
    <name type="scientific">Streptomyces griseus</name>
    <dbReference type="NCBI Taxonomy" id="1911"/>
    <lineage>
        <taxon>Bacteria</taxon>
        <taxon>Bacillati</taxon>
        <taxon>Actinomycetota</taxon>
        <taxon>Actinomycetes</taxon>
        <taxon>Kitasatosporales</taxon>
        <taxon>Streptomycetaceae</taxon>
        <taxon>Streptomyces</taxon>
    </lineage>
</organism>
<keyword id="KW-0010">Activator</keyword>
<keyword id="KW-0238">DNA-binding</keyword>
<keyword id="KW-0319">Glycerol metabolism</keyword>
<keyword id="KW-0804">Transcription</keyword>
<keyword id="KW-0805">Transcription regulation</keyword>
<protein>
    <recommendedName>
        <fullName>Glycerol operon regulatory protein</fullName>
    </recommendedName>
</protein>
<proteinExistence type="evidence at transcript level"/>